<dbReference type="EMBL" id="BX294022">
    <property type="protein sequence ID" value="CAD70957.1"/>
    <property type="molecule type" value="Genomic_DNA"/>
</dbReference>
<dbReference type="EMBL" id="CM002240">
    <property type="protein sequence ID" value="EAA26738.2"/>
    <property type="molecule type" value="Genomic_DNA"/>
</dbReference>
<dbReference type="RefSeq" id="XP_955974.2">
    <property type="nucleotide sequence ID" value="XM_950881.3"/>
</dbReference>
<dbReference type="PDB" id="7R81">
    <property type="method" value="EM"/>
    <property type="resolution" value="2.70 A"/>
    <property type="chains" value="C2=1-256"/>
</dbReference>
<dbReference type="PDBsum" id="7R81"/>
<dbReference type="EMDB" id="EMD-24307"/>
<dbReference type="SMR" id="Q871N9"/>
<dbReference type="FunCoup" id="Q871N9">
    <property type="interactions" value="1248"/>
</dbReference>
<dbReference type="STRING" id="367110.Q871N9"/>
<dbReference type="PaxDb" id="5141-EFNCRP00000007570"/>
<dbReference type="EnsemblFungi" id="EAA26738">
    <property type="protein sequence ID" value="EAA26738"/>
    <property type="gene ID" value="NCU01452"/>
</dbReference>
<dbReference type="GeneID" id="3872112"/>
<dbReference type="KEGG" id="ncr:NCU01452"/>
<dbReference type="VEuPathDB" id="FungiDB:NCU01452"/>
<dbReference type="HOGENOM" id="CLU_062507_0_0_1"/>
<dbReference type="InParanoid" id="Q871N9"/>
<dbReference type="OMA" id="TRFKGHE"/>
<dbReference type="OrthoDB" id="9834376at2759"/>
<dbReference type="Proteomes" id="UP000001805">
    <property type="component" value="Chromosome 2, Linkage Group V"/>
</dbReference>
<dbReference type="GO" id="GO:0005829">
    <property type="term" value="C:cytosol"/>
    <property type="evidence" value="ECO:0000318"/>
    <property type="project" value="GO_Central"/>
</dbReference>
<dbReference type="GO" id="GO:0022627">
    <property type="term" value="C:cytosolic small ribosomal subunit"/>
    <property type="evidence" value="ECO:0007669"/>
    <property type="project" value="UniProtKB-UniRule"/>
</dbReference>
<dbReference type="GO" id="GO:0003735">
    <property type="term" value="F:structural constituent of ribosome"/>
    <property type="evidence" value="ECO:0007669"/>
    <property type="project" value="UniProtKB-UniRule"/>
</dbReference>
<dbReference type="GO" id="GO:0006412">
    <property type="term" value="P:translation"/>
    <property type="evidence" value="ECO:0007669"/>
    <property type="project" value="UniProtKB-UniRule"/>
</dbReference>
<dbReference type="HAMAP" id="MF_03122">
    <property type="entry name" value="Ribosomal_eS1_euk"/>
    <property type="match status" value="1"/>
</dbReference>
<dbReference type="InterPro" id="IPR001593">
    <property type="entry name" value="Ribosomal_eS1"/>
</dbReference>
<dbReference type="InterPro" id="IPR018281">
    <property type="entry name" value="Ribosomal_eS1_CS"/>
</dbReference>
<dbReference type="InterPro" id="IPR027500">
    <property type="entry name" value="Ribosomal_eS1_euk"/>
</dbReference>
<dbReference type="PANTHER" id="PTHR11830">
    <property type="entry name" value="40S RIBOSOMAL PROTEIN S3A"/>
    <property type="match status" value="1"/>
</dbReference>
<dbReference type="Pfam" id="PF01015">
    <property type="entry name" value="Ribosomal_S3Ae"/>
    <property type="match status" value="1"/>
</dbReference>
<dbReference type="SMART" id="SM01397">
    <property type="entry name" value="Ribosomal_S3Ae"/>
    <property type="match status" value="1"/>
</dbReference>
<dbReference type="PROSITE" id="PS01191">
    <property type="entry name" value="RIBOSOMAL_S3AE"/>
    <property type="match status" value="1"/>
</dbReference>
<protein>
    <recommendedName>
        <fullName evidence="1 4">Small ribosomal subunit protein eS1</fullName>
    </recommendedName>
    <alternativeName>
        <fullName>40S ribosomal protein S1</fullName>
    </alternativeName>
    <alternativeName>
        <fullName>Cytoplasmic ribosomal protein 8</fullName>
    </alternativeName>
</protein>
<sequence>MAVGKNKRLSKGKKGLKKKTQDPFARKDWYGIKAPAPFNVRDVGKTLVNRTTGLKNANDALKGRIFEVSLADLQKDEDHSFRKVKLRVDEIQGKNCLTNFHGLDFTSDKLRSLVRKWQTLIEANITVKTTDDYLLRLFAIAFTKRRPNQVKKTTYAASSQIRAIRRKMTEIIQREASSCTLTQLTSKLIPEVIGREIEKATQGIYPLQNVHIRKVKLLKQPKFDLGALMSLHGESGSDEAGQKVEREFKETVLESV</sequence>
<evidence type="ECO:0000255" key="1">
    <source>
        <dbReference type="HAMAP-Rule" id="MF_03122"/>
    </source>
</evidence>
<evidence type="ECO:0000256" key="2">
    <source>
        <dbReference type="SAM" id="MobiDB-lite"/>
    </source>
</evidence>
<evidence type="ECO:0000269" key="3">
    <source>
    </source>
</evidence>
<evidence type="ECO:0000303" key="4">
    <source>
    </source>
</evidence>
<evidence type="ECO:0000305" key="5">
    <source>
    </source>
</evidence>
<evidence type="ECO:0007744" key="6">
    <source>
        <dbReference type="PDB" id="7R81"/>
    </source>
</evidence>
<feature type="initiator methionine" description="Removed" evidence="1">
    <location>
        <position position="1"/>
    </location>
</feature>
<feature type="chain" id="PRO_0000389389" description="Small ribosomal subunit protein eS1">
    <location>
        <begin position="2"/>
        <end position="256"/>
    </location>
</feature>
<feature type="region of interest" description="Disordered" evidence="2">
    <location>
        <begin position="1"/>
        <end position="22"/>
    </location>
</feature>
<feature type="compositionally biased region" description="Basic residues" evidence="2">
    <location>
        <begin position="1"/>
        <end position="18"/>
    </location>
</feature>
<feature type="modified residue" description="N-acetylalanine; partial" evidence="1">
    <location>
        <position position="2"/>
    </location>
</feature>
<comment type="function">
    <text evidence="5">Component of the ribosome, a large ribonucleoprotein complex responsible for the synthesis of proteins in the cell. The small ribosomal subunit (SSU) binds messenger RNAs (mRNAs) and translates the encoded message by selecting cognate aminoacyl-transfer RNA (tRNA) molecules. The large subunit (LSU) contains the ribosomal catalytic site termed the peptidyl transferase center (PTC), which catalyzes the formation of peptide bonds, thereby polymerizing the amino acids delivered by tRNAs into a polypeptide chain. The nascent polypeptides leave the ribosome through a tunnel in the LSU and interact with protein factors that function in enzymatic processing, targeting, and the membrane insertion of nascent chains at the exit of the ribosomal tunnel.</text>
</comment>
<comment type="subunit">
    <text evidence="1 3">Component of the small ribosomal subunit (SSU). Mature N.crassa ribosomes consist of a small (40S) and a large (60S) subunit. The 40S small subunit contains 1 molecule of ribosomal RNA (18S rRNA) and at least 32 different proteins. The large 60S subunit contains 3 rRNA molecules (26S, 5.8S and 5S rRNA) and at least 42 different proteins.</text>
</comment>
<comment type="subcellular location">
    <subcellularLocation>
        <location evidence="1 3">Cytoplasm</location>
    </subcellularLocation>
</comment>
<comment type="similarity">
    <text evidence="1">Belongs to the eukaryotic ribosomal protein eS1 family.</text>
</comment>
<proteinExistence type="evidence at protein level"/>
<name>RS3A_NEUCR</name>
<gene>
    <name type="primary">rps1</name>
    <name type="synonym">crp-8</name>
    <name type="ORF">B11C21.160</name>
    <name type="ORF">NCU01452</name>
</gene>
<keyword id="KW-0002">3D-structure</keyword>
<keyword id="KW-0007">Acetylation</keyword>
<keyword id="KW-0963">Cytoplasm</keyword>
<keyword id="KW-1185">Reference proteome</keyword>
<keyword id="KW-0687">Ribonucleoprotein</keyword>
<keyword id="KW-0689">Ribosomal protein</keyword>
<organism>
    <name type="scientific">Neurospora crassa (strain ATCC 24698 / 74-OR23-1A / CBS 708.71 / DSM 1257 / FGSC 987)</name>
    <dbReference type="NCBI Taxonomy" id="367110"/>
    <lineage>
        <taxon>Eukaryota</taxon>
        <taxon>Fungi</taxon>
        <taxon>Dikarya</taxon>
        <taxon>Ascomycota</taxon>
        <taxon>Pezizomycotina</taxon>
        <taxon>Sordariomycetes</taxon>
        <taxon>Sordariomycetidae</taxon>
        <taxon>Sordariales</taxon>
        <taxon>Sordariaceae</taxon>
        <taxon>Neurospora</taxon>
    </lineage>
</organism>
<accession>Q871N9</accession>
<accession>Q7RWF6</accession>
<reference key="1">
    <citation type="journal article" date="2003" name="Nucleic Acids Res.">
        <title>What's in the genome of a filamentous fungus? Analysis of the Neurospora genome sequence.</title>
        <authorList>
            <person name="Mannhaupt G."/>
            <person name="Montrone C."/>
            <person name="Haase D."/>
            <person name="Mewes H.-W."/>
            <person name="Aign V."/>
            <person name="Hoheisel J.D."/>
            <person name="Fartmann B."/>
            <person name="Nyakatura G."/>
            <person name="Kempken F."/>
            <person name="Maier J."/>
            <person name="Schulte U."/>
        </authorList>
    </citation>
    <scope>NUCLEOTIDE SEQUENCE [LARGE SCALE GENOMIC DNA]</scope>
    <source>
        <strain>ATCC 24698 / 74-OR23-1A / CBS 708.71 / DSM 1257 / FGSC 987</strain>
    </source>
</reference>
<reference key="2">
    <citation type="journal article" date="2003" name="Nature">
        <title>The genome sequence of the filamentous fungus Neurospora crassa.</title>
        <authorList>
            <person name="Galagan J.E."/>
            <person name="Calvo S.E."/>
            <person name="Borkovich K.A."/>
            <person name="Selker E.U."/>
            <person name="Read N.D."/>
            <person name="Jaffe D.B."/>
            <person name="FitzHugh W."/>
            <person name="Ma L.-J."/>
            <person name="Smirnov S."/>
            <person name="Purcell S."/>
            <person name="Rehman B."/>
            <person name="Elkins T."/>
            <person name="Engels R."/>
            <person name="Wang S."/>
            <person name="Nielsen C.B."/>
            <person name="Butler J."/>
            <person name="Endrizzi M."/>
            <person name="Qui D."/>
            <person name="Ianakiev P."/>
            <person name="Bell-Pedersen D."/>
            <person name="Nelson M.A."/>
            <person name="Werner-Washburne M."/>
            <person name="Selitrennikoff C.P."/>
            <person name="Kinsey J.A."/>
            <person name="Braun E.L."/>
            <person name="Zelter A."/>
            <person name="Schulte U."/>
            <person name="Kothe G.O."/>
            <person name="Jedd G."/>
            <person name="Mewes H.-W."/>
            <person name="Staben C."/>
            <person name="Marcotte E."/>
            <person name="Greenberg D."/>
            <person name="Roy A."/>
            <person name="Foley K."/>
            <person name="Naylor J."/>
            <person name="Stange-Thomann N."/>
            <person name="Barrett R."/>
            <person name="Gnerre S."/>
            <person name="Kamal M."/>
            <person name="Kamvysselis M."/>
            <person name="Mauceli E.W."/>
            <person name="Bielke C."/>
            <person name="Rudd S."/>
            <person name="Frishman D."/>
            <person name="Krystofova S."/>
            <person name="Rasmussen C."/>
            <person name="Metzenberg R.L."/>
            <person name="Perkins D.D."/>
            <person name="Kroken S."/>
            <person name="Cogoni C."/>
            <person name="Macino G."/>
            <person name="Catcheside D.E.A."/>
            <person name="Li W."/>
            <person name="Pratt R.J."/>
            <person name="Osmani S.A."/>
            <person name="DeSouza C.P.C."/>
            <person name="Glass N.L."/>
            <person name="Orbach M.J."/>
            <person name="Berglund J.A."/>
            <person name="Voelker R."/>
            <person name="Yarden O."/>
            <person name="Plamann M."/>
            <person name="Seiler S."/>
            <person name="Dunlap J.C."/>
            <person name="Radford A."/>
            <person name="Aramayo R."/>
            <person name="Natvig D.O."/>
            <person name="Alex L.A."/>
            <person name="Mannhaupt G."/>
            <person name="Ebbole D.J."/>
            <person name="Freitag M."/>
            <person name="Paulsen I."/>
            <person name="Sachs M.S."/>
            <person name="Lander E.S."/>
            <person name="Nusbaum C."/>
            <person name="Birren B.W."/>
        </authorList>
    </citation>
    <scope>NUCLEOTIDE SEQUENCE [LARGE SCALE GENOMIC DNA]</scope>
    <source>
        <strain>ATCC 24698 / 74-OR23-1A / CBS 708.71 / DSM 1257 / FGSC 987</strain>
    </source>
</reference>
<reference evidence="6" key="3">
    <citation type="journal article" date="2021" name="Proc. Natl. Acad. Sci. U.S.A.">
        <title>Structure of the translating Neurospora ribosome arrested by cycloheximide.</title>
        <authorList>
            <person name="Shen L."/>
            <person name="Su Z."/>
            <person name="Yang K."/>
            <person name="Wu C."/>
            <person name="Becker T."/>
            <person name="Bell-Pedersen D."/>
            <person name="Zhang J."/>
            <person name="Sachs M.S."/>
        </authorList>
    </citation>
    <scope>STRUCTURE BY ELECTRON MICROSCOPY (2.70 ANGSTROMS)</scope>
</reference>